<proteinExistence type="inferred from homology"/>
<sequence length="181" mass="21245">MKLLFDFFPIVLFFIVYKFFGIYTATAVAMVASLTQVAFYRLKFQHYEKMHLFSLAIIMVLGGATLFFQNPWFIKWKPTGIYWLSALVFYGSGYIGSKPLIQKMMEANINLTTKIWYRLNLAWTLFFIVMGALNLYVAYHYDTDVWVNFKLFGGVGFTLLFVLIQAFYLTKHTDEKSFEKQ</sequence>
<dbReference type="EMBL" id="CP000675">
    <property type="protein sequence ID" value="ABQ54695.1"/>
    <property type="molecule type" value="Genomic_DNA"/>
</dbReference>
<dbReference type="RefSeq" id="WP_011215337.1">
    <property type="nucleotide sequence ID" value="NZ_JAPMSS010000002.1"/>
</dbReference>
<dbReference type="KEGG" id="lpc:LPC_0717"/>
<dbReference type="HOGENOM" id="CLU_089554_2_0_6"/>
<dbReference type="GO" id="GO:0005886">
    <property type="term" value="C:plasma membrane"/>
    <property type="evidence" value="ECO:0007669"/>
    <property type="project" value="UniProtKB-SubCell"/>
</dbReference>
<dbReference type="HAMAP" id="MF_00189">
    <property type="entry name" value="YciB"/>
    <property type="match status" value="1"/>
</dbReference>
<dbReference type="InterPro" id="IPR006008">
    <property type="entry name" value="YciB"/>
</dbReference>
<dbReference type="NCBIfam" id="TIGR00997">
    <property type="entry name" value="ispZ"/>
    <property type="match status" value="1"/>
</dbReference>
<dbReference type="NCBIfam" id="NF001325">
    <property type="entry name" value="PRK00259.1-3"/>
    <property type="match status" value="1"/>
</dbReference>
<dbReference type="PANTHER" id="PTHR36917:SF1">
    <property type="entry name" value="INNER MEMBRANE-SPANNING PROTEIN YCIB"/>
    <property type="match status" value="1"/>
</dbReference>
<dbReference type="PANTHER" id="PTHR36917">
    <property type="entry name" value="INTRACELLULAR SEPTATION PROTEIN A-RELATED"/>
    <property type="match status" value="1"/>
</dbReference>
<dbReference type="Pfam" id="PF04279">
    <property type="entry name" value="IspA"/>
    <property type="match status" value="1"/>
</dbReference>
<feature type="chain" id="PRO_1000021024" description="Inner membrane-spanning protein YciB">
    <location>
        <begin position="1"/>
        <end position="181"/>
    </location>
</feature>
<feature type="transmembrane region" description="Helical" evidence="1">
    <location>
        <begin position="3"/>
        <end position="23"/>
    </location>
</feature>
<feature type="transmembrane region" description="Helical" evidence="1">
    <location>
        <begin position="54"/>
        <end position="74"/>
    </location>
</feature>
<feature type="transmembrane region" description="Helical" evidence="1">
    <location>
        <begin position="81"/>
        <end position="101"/>
    </location>
</feature>
<feature type="transmembrane region" description="Helical" evidence="1">
    <location>
        <begin position="119"/>
        <end position="139"/>
    </location>
</feature>
<feature type="transmembrane region" description="Helical" evidence="1">
    <location>
        <begin position="149"/>
        <end position="169"/>
    </location>
</feature>
<protein>
    <recommendedName>
        <fullName evidence="1">Inner membrane-spanning protein YciB</fullName>
    </recommendedName>
</protein>
<name>YCIB_LEGPC</name>
<accession>A5IBE5</accession>
<organism>
    <name type="scientific">Legionella pneumophila (strain Corby)</name>
    <dbReference type="NCBI Taxonomy" id="400673"/>
    <lineage>
        <taxon>Bacteria</taxon>
        <taxon>Pseudomonadati</taxon>
        <taxon>Pseudomonadota</taxon>
        <taxon>Gammaproteobacteria</taxon>
        <taxon>Legionellales</taxon>
        <taxon>Legionellaceae</taxon>
        <taxon>Legionella</taxon>
    </lineage>
</organism>
<gene>
    <name evidence="1" type="primary">yciB</name>
    <name type="ordered locus">LPC_0717</name>
</gene>
<comment type="function">
    <text evidence="1">Plays a role in cell envelope biogenesis, maintenance of cell envelope integrity and membrane homeostasis.</text>
</comment>
<comment type="subcellular location">
    <subcellularLocation>
        <location evidence="1">Cell inner membrane</location>
        <topology evidence="1">Multi-pass membrane protein</topology>
    </subcellularLocation>
</comment>
<comment type="similarity">
    <text evidence="1">Belongs to the YciB family.</text>
</comment>
<keyword id="KW-0997">Cell inner membrane</keyword>
<keyword id="KW-1003">Cell membrane</keyword>
<keyword id="KW-0472">Membrane</keyword>
<keyword id="KW-0812">Transmembrane</keyword>
<keyword id="KW-1133">Transmembrane helix</keyword>
<reference key="1">
    <citation type="submission" date="2006-11" db="EMBL/GenBank/DDBJ databases">
        <title>Identification and characterization of a new conjugation/ type IVA secretion system (trb/tra) of L. pneumophila Corby localized on a mobile genomic island.</title>
        <authorList>
            <person name="Gloeckner G."/>
            <person name="Albert-Weissenberger C."/>
            <person name="Weinmann E."/>
            <person name="Jacobi S."/>
            <person name="Schunder E."/>
            <person name="Steinert M."/>
            <person name="Buchrieser C."/>
            <person name="Hacker J."/>
            <person name="Heuner K."/>
        </authorList>
    </citation>
    <scope>NUCLEOTIDE SEQUENCE [LARGE SCALE GENOMIC DNA]</scope>
    <source>
        <strain>Corby</strain>
    </source>
</reference>
<evidence type="ECO:0000255" key="1">
    <source>
        <dbReference type="HAMAP-Rule" id="MF_00189"/>
    </source>
</evidence>